<name>FLZ14_ARATH</name>
<protein>
    <recommendedName>
        <fullName evidence="7">FCS-Like Zinc finger 14</fullName>
    </recommendedName>
</protein>
<gene>
    <name evidence="7" type="primary">FLZ14</name>
    <name evidence="6" type="synonym">DUF581-15</name>
    <name evidence="9" type="ordered locus">At5g20700</name>
    <name evidence="10" type="ORF">T1M15.100</name>
</gene>
<accession>Q8GYX2</accession>
<comment type="function">
    <text evidence="3">May act as an adapter to facilitate the interaction of SnRK1 complex with effector proteins, conferring tissue- and stimulus-type specific differences in the SnRK1 regulation pathway.</text>
</comment>
<comment type="subunit">
    <text evidence="5">Interacts with KIN10 and KIN11 via its FLZ-type zinc finger domain (PubMed:29945970). Interacts with KINB1, KINB2 and KINB3 via its N-terminal part (PubMed:29945970).</text>
</comment>
<comment type="subcellular location">
    <subcellularLocation>
        <location evidence="5">Cytoplasm</location>
    </subcellularLocation>
    <subcellularLocation>
        <location evidence="5">Nucleus</location>
    </subcellularLocation>
</comment>
<comment type="induction">
    <text evidence="4">Down-regulated in response to mild as well as prolonged energy depletion (PubMed:26442059). Up-regulated by glucose, sucrose and mannose (PubMed:26442059).</text>
</comment>
<comment type="similarity">
    <text evidence="8">Belongs to the FLZ family.</text>
</comment>
<feature type="chain" id="PRO_0000445504" description="FCS-Like Zinc finger 14">
    <location>
        <begin position="1"/>
        <end position="248"/>
    </location>
</feature>
<feature type="zinc finger region" description="FLZ-type" evidence="1">
    <location>
        <begin position="181"/>
        <end position="224"/>
    </location>
</feature>
<feature type="region of interest" description="Disordered" evidence="2">
    <location>
        <begin position="85"/>
        <end position="108"/>
    </location>
</feature>
<feature type="compositionally biased region" description="Polar residues" evidence="2">
    <location>
        <begin position="85"/>
        <end position="94"/>
    </location>
</feature>
<keyword id="KW-0963">Cytoplasm</keyword>
<keyword id="KW-0479">Metal-binding</keyword>
<keyword id="KW-0539">Nucleus</keyword>
<keyword id="KW-1185">Reference proteome</keyword>
<keyword id="KW-0862">Zinc</keyword>
<keyword id="KW-0863">Zinc-finger</keyword>
<evidence type="ECO:0000255" key="1">
    <source>
        <dbReference type="PROSITE-ProRule" id="PRU01131"/>
    </source>
</evidence>
<evidence type="ECO:0000256" key="2">
    <source>
        <dbReference type="SAM" id="MobiDB-lite"/>
    </source>
</evidence>
<evidence type="ECO:0000269" key="3">
    <source>
    </source>
</evidence>
<evidence type="ECO:0000269" key="4">
    <source>
    </source>
</evidence>
<evidence type="ECO:0000269" key="5">
    <source>
    </source>
</evidence>
<evidence type="ECO:0000303" key="6">
    <source>
    </source>
</evidence>
<evidence type="ECO:0000303" key="7">
    <source>
    </source>
</evidence>
<evidence type="ECO:0000305" key="8"/>
<evidence type="ECO:0000312" key="9">
    <source>
        <dbReference type="Araport" id="AT5G20700"/>
    </source>
</evidence>
<evidence type="ECO:0000312" key="10">
    <source>
        <dbReference type="EMBL" id="AED92879.1"/>
    </source>
</evidence>
<dbReference type="EMBL" id="AF296832">
    <property type="status" value="NOT_ANNOTATED_CDS"/>
    <property type="molecule type" value="Genomic_DNA"/>
</dbReference>
<dbReference type="EMBL" id="CP002688">
    <property type="protein sequence ID" value="AED92879.1"/>
    <property type="molecule type" value="Genomic_DNA"/>
</dbReference>
<dbReference type="EMBL" id="AK117339">
    <property type="protein sequence ID" value="BAC42009.1"/>
    <property type="molecule type" value="mRNA"/>
</dbReference>
<dbReference type="EMBL" id="BT008340">
    <property type="protein sequence ID" value="AAP37699.1"/>
    <property type="molecule type" value="mRNA"/>
</dbReference>
<dbReference type="RefSeq" id="NP_197570.1">
    <property type="nucleotide sequence ID" value="NM_122077.4"/>
</dbReference>
<dbReference type="FunCoup" id="Q8GYX2">
    <property type="interactions" value="79"/>
</dbReference>
<dbReference type="STRING" id="3702.Q8GYX2"/>
<dbReference type="PaxDb" id="3702-AT5G20700.1"/>
<dbReference type="ProteomicsDB" id="230524"/>
<dbReference type="EnsemblPlants" id="AT5G20700.1">
    <property type="protein sequence ID" value="AT5G20700.1"/>
    <property type="gene ID" value="AT5G20700"/>
</dbReference>
<dbReference type="GeneID" id="832193"/>
<dbReference type="Gramene" id="AT5G20700.1">
    <property type="protein sequence ID" value="AT5G20700.1"/>
    <property type="gene ID" value="AT5G20700"/>
</dbReference>
<dbReference type="KEGG" id="ath:AT5G20700"/>
<dbReference type="Araport" id="AT5G20700"/>
<dbReference type="TAIR" id="AT5G20700"/>
<dbReference type="eggNOG" id="ENOG502RZ1P">
    <property type="taxonomic scope" value="Eukaryota"/>
</dbReference>
<dbReference type="HOGENOM" id="CLU_103134_0_0_1"/>
<dbReference type="InParanoid" id="Q8GYX2"/>
<dbReference type="OMA" id="NEKCKSP"/>
<dbReference type="PhylomeDB" id="Q8GYX2"/>
<dbReference type="PRO" id="PR:Q8GYX2"/>
<dbReference type="Proteomes" id="UP000006548">
    <property type="component" value="Chromosome 5"/>
</dbReference>
<dbReference type="ExpressionAtlas" id="Q8GYX2">
    <property type="expression patterns" value="baseline and differential"/>
</dbReference>
<dbReference type="GO" id="GO:0005737">
    <property type="term" value="C:cytoplasm"/>
    <property type="evidence" value="ECO:0000314"/>
    <property type="project" value="UniProtKB"/>
</dbReference>
<dbReference type="GO" id="GO:0005634">
    <property type="term" value="C:nucleus"/>
    <property type="evidence" value="ECO:0000314"/>
    <property type="project" value="UniProtKB"/>
</dbReference>
<dbReference type="GO" id="GO:0008270">
    <property type="term" value="F:zinc ion binding"/>
    <property type="evidence" value="ECO:0007669"/>
    <property type="project" value="UniProtKB-KW"/>
</dbReference>
<dbReference type="GO" id="GO:0009749">
    <property type="term" value="P:response to glucose"/>
    <property type="evidence" value="ECO:0000270"/>
    <property type="project" value="UniProtKB"/>
</dbReference>
<dbReference type="GO" id="GO:1905582">
    <property type="term" value="P:response to mannose"/>
    <property type="evidence" value="ECO:0000270"/>
    <property type="project" value="UniProtKB"/>
</dbReference>
<dbReference type="GO" id="GO:0042594">
    <property type="term" value="P:response to starvation"/>
    <property type="evidence" value="ECO:0000270"/>
    <property type="project" value="UniProtKB"/>
</dbReference>
<dbReference type="GO" id="GO:0009744">
    <property type="term" value="P:response to sucrose"/>
    <property type="evidence" value="ECO:0000270"/>
    <property type="project" value="UniProtKB"/>
</dbReference>
<dbReference type="InterPro" id="IPR044604">
    <property type="entry name" value="FLZ12/13/14"/>
</dbReference>
<dbReference type="InterPro" id="IPR007650">
    <property type="entry name" value="Zf-FLZ_dom"/>
</dbReference>
<dbReference type="PANTHER" id="PTHR47208:SF3">
    <property type="entry name" value="FCS-LIKE ZINC FINGER 14"/>
    <property type="match status" value="1"/>
</dbReference>
<dbReference type="PANTHER" id="PTHR47208">
    <property type="entry name" value="OS02G0174800 PROTEIN"/>
    <property type="match status" value="1"/>
</dbReference>
<dbReference type="Pfam" id="PF04570">
    <property type="entry name" value="zf-FLZ"/>
    <property type="match status" value="1"/>
</dbReference>
<dbReference type="PROSITE" id="PS51795">
    <property type="entry name" value="ZF_FLZ"/>
    <property type="match status" value="1"/>
</dbReference>
<proteinExistence type="evidence at protein level"/>
<sequence length="248" mass="27739">MLTKRTHPMIGKISELLVGVNRSTAAPFFDVLMTSPKSPLDFKILPQISQRNSSKRFYDDNLGGSVGLGIVAALENSNTRRITSVCRSEPNQPGRSDPVQFMSHGGSTDGEDEEMFIMDEEDYTLVTCHHGPSGSCNTRVYDKDGFECFSSKINDDRRERLFVVDVVTESPENSPEFQGLGFLNSCYLCRKKLHGQDIFIYRGEKAFCSTECRSSHIANDERKERCRSKFSTSPYTAGQIFSTGVLVT</sequence>
<organism>
    <name type="scientific">Arabidopsis thaliana</name>
    <name type="common">Mouse-ear cress</name>
    <dbReference type="NCBI Taxonomy" id="3702"/>
    <lineage>
        <taxon>Eukaryota</taxon>
        <taxon>Viridiplantae</taxon>
        <taxon>Streptophyta</taxon>
        <taxon>Embryophyta</taxon>
        <taxon>Tracheophyta</taxon>
        <taxon>Spermatophyta</taxon>
        <taxon>Magnoliopsida</taxon>
        <taxon>eudicotyledons</taxon>
        <taxon>Gunneridae</taxon>
        <taxon>Pentapetalae</taxon>
        <taxon>rosids</taxon>
        <taxon>malvids</taxon>
        <taxon>Brassicales</taxon>
        <taxon>Brassicaceae</taxon>
        <taxon>Camelineae</taxon>
        <taxon>Arabidopsis</taxon>
    </lineage>
</organism>
<reference key="1">
    <citation type="journal article" date="2000" name="Nature">
        <title>Sequence and analysis of chromosome 5 of the plant Arabidopsis thaliana.</title>
        <authorList>
            <person name="Tabata S."/>
            <person name="Kaneko T."/>
            <person name="Nakamura Y."/>
            <person name="Kotani H."/>
            <person name="Kato T."/>
            <person name="Asamizu E."/>
            <person name="Miyajima N."/>
            <person name="Sasamoto S."/>
            <person name="Kimura T."/>
            <person name="Hosouchi T."/>
            <person name="Kawashima K."/>
            <person name="Kohara M."/>
            <person name="Matsumoto M."/>
            <person name="Matsuno A."/>
            <person name="Muraki A."/>
            <person name="Nakayama S."/>
            <person name="Nakazaki N."/>
            <person name="Naruo K."/>
            <person name="Okumura S."/>
            <person name="Shinpo S."/>
            <person name="Takeuchi C."/>
            <person name="Wada T."/>
            <person name="Watanabe A."/>
            <person name="Yamada M."/>
            <person name="Yasuda M."/>
            <person name="Sato S."/>
            <person name="de la Bastide M."/>
            <person name="Huang E."/>
            <person name="Spiegel L."/>
            <person name="Gnoj L."/>
            <person name="O'Shaughnessy A."/>
            <person name="Preston R."/>
            <person name="Habermann K."/>
            <person name="Murray J."/>
            <person name="Johnson D."/>
            <person name="Rohlfing T."/>
            <person name="Nelson J."/>
            <person name="Stoneking T."/>
            <person name="Pepin K."/>
            <person name="Spieth J."/>
            <person name="Sekhon M."/>
            <person name="Armstrong J."/>
            <person name="Becker M."/>
            <person name="Belter E."/>
            <person name="Cordum H."/>
            <person name="Cordes M."/>
            <person name="Courtney L."/>
            <person name="Courtney W."/>
            <person name="Dante M."/>
            <person name="Du H."/>
            <person name="Edwards J."/>
            <person name="Fryman J."/>
            <person name="Haakensen B."/>
            <person name="Lamar E."/>
            <person name="Latreille P."/>
            <person name="Leonard S."/>
            <person name="Meyer R."/>
            <person name="Mulvaney E."/>
            <person name="Ozersky P."/>
            <person name="Riley A."/>
            <person name="Strowmatt C."/>
            <person name="Wagner-McPherson C."/>
            <person name="Wollam A."/>
            <person name="Yoakum M."/>
            <person name="Bell M."/>
            <person name="Dedhia N."/>
            <person name="Parnell L."/>
            <person name="Shah R."/>
            <person name="Rodriguez M."/>
            <person name="Hoon See L."/>
            <person name="Vil D."/>
            <person name="Baker J."/>
            <person name="Kirchoff K."/>
            <person name="Toth K."/>
            <person name="King L."/>
            <person name="Bahret A."/>
            <person name="Miller B."/>
            <person name="Marra M.A."/>
            <person name="Martienssen R."/>
            <person name="McCombie W.R."/>
            <person name="Wilson R.K."/>
            <person name="Murphy G."/>
            <person name="Bancroft I."/>
            <person name="Volckaert G."/>
            <person name="Wambutt R."/>
            <person name="Duesterhoeft A."/>
            <person name="Stiekema W."/>
            <person name="Pohl T."/>
            <person name="Entian K.-D."/>
            <person name="Terryn N."/>
            <person name="Hartley N."/>
            <person name="Bent E."/>
            <person name="Johnson S."/>
            <person name="Langham S.-A."/>
            <person name="McCullagh B."/>
            <person name="Robben J."/>
            <person name="Grymonprez B."/>
            <person name="Zimmermann W."/>
            <person name="Ramsperger U."/>
            <person name="Wedler H."/>
            <person name="Balke K."/>
            <person name="Wedler E."/>
            <person name="Peters S."/>
            <person name="van Staveren M."/>
            <person name="Dirkse W."/>
            <person name="Mooijman P."/>
            <person name="Klein Lankhorst R."/>
            <person name="Weitzenegger T."/>
            <person name="Bothe G."/>
            <person name="Rose M."/>
            <person name="Hauf J."/>
            <person name="Berneiser S."/>
            <person name="Hempel S."/>
            <person name="Feldpausch M."/>
            <person name="Lamberth S."/>
            <person name="Villarroel R."/>
            <person name="Gielen J."/>
            <person name="Ardiles W."/>
            <person name="Bents O."/>
            <person name="Lemcke K."/>
            <person name="Kolesov G."/>
            <person name="Mayer K.F.X."/>
            <person name="Rudd S."/>
            <person name="Schoof H."/>
            <person name="Schueller C."/>
            <person name="Zaccaria P."/>
            <person name="Mewes H.-W."/>
            <person name="Bevan M."/>
            <person name="Fransz P.F."/>
        </authorList>
    </citation>
    <scope>NUCLEOTIDE SEQUENCE [LARGE SCALE GENOMIC DNA]</scope>
    <source>
        <strain>cv. Columbia</strain>
    </source>
</reference>
<reference key="2">
    <citation type="journal article" date="2017" name="Plant J.">
        <title>Araport11: a complete reannotation of the Arabidopsis thaliana reference genome.</title>
        <authorList>
            <person name="Cheng C.Y."/>
            <person name="Krishnakumar V."/>
            <person name="Chan A.P."/>
            <person name="Thibaud-Nissen F."/>
            <person name="Schobel S."/>
            <person name="Town C.D."/>
        </authorList>
    </citation>
    <scope>GENOME REANNOTATION</scope>
    <source>
        <strain>cv. Columbia</strain>
    </source>
</reference>
<reference key="3">
    <citation type="journal article" date="2002" name="Science">
        <title>Functional annotation of a full-length Arabidopsis cDNA collection.</title>
        <authorList>
            <person name="Seki M."/>
            <person name="Narusaka M."/>
            <person name="Kamiya A."/>
            <person name="Ishida J."/>
            <person name="Satou M."/>
            <person name="Sakurai T."/>
            <person name="Nakajima M."/>
            <person name="Enju A."/>
            <person name="Akiyama K."/>
            <person name="Oono Y."/>
            <person name="Muramatsu M."/>
            <person name="Hayashizaki Y."/>
            <person name="Kawai J."/>
            <person name="Carninci P."/>
            <person name="Itoh M."/>
            <person name="Ishii Y."/>
            <person name="Arakawa T."/>
            <person name="Shibata K."/>
            <person name="Shinagawa A."/>
            <person name="Shinozaki K."/>
        </authorList>
    </citation>
    <scope>NUCLEOTIDE SEQUENCE [LARGE SCALE MRNA]</scope>
    <source>
        <strain>cv. Columbia</strain>
    </source>
</reference>
<reference key="4">
    <citation type="journal article" date="2003" name="Science">
        <title>Empirical analysis of transcriptional activity in the Arabidopsis genome.</title>
        <authorList>
            <person name="Yamada K."/>
            <person name="Lim J."/>
            <person name="Dale J.M."/>
            <person name="Chen H."/>
            <person name="Shinn P."/>
            <person name="Palm C.J."/>
            <person name="Southwick A.M."/>
            <person name="Wu H.C."/>
            <person name="Kim C.J."/>
            <person name="Nguyen M."/>
            <person name="Pham P.K."/>
            <person name="Cheuk R.F."/>
            <person name="Karlin-Newmann G."/>
            <person name="Liu S.X."/>
            <person name="Lam B."/>
            <person name="Sakano H."/>
            <person name="Wu T."/>
            <person name="Yu G."/>
            <person name="Miranda M."/>
            <person name="Quach H.L."/>
            <person name="Tripp M."/>
            <person name="Chang C.H."/>
            <person name="Lee J.M."/>
            <person name="Toriumi M.J."/>
            <person name="Chan M.M."/>
            <person name="Tang C.C."/>
            <person name="Onodera C.S."/>
            <person name="Deng J.M."/>
            <person name="Akiyama K."/>
            <person name="Ansari Y."/>
            <person name="Arakawa T."/>
            <person name="Banh J."/>
            <person name="Banno F."/>
            <person name="Bowser L."/>
            <person name="Brooks S.Y."/>
            <person name="Carninci P."/>
            <person name="Chao Q."/>
            <person name="Choy N."/>
            <person name="Enju A."/>
            <person name="Goldsmith A.D."/>
            <person name="Gurjal M."/>
            <person name="Hansen N.F."/>
            <person name="Hayashizaki Y."/>
            <person name="Johnson-Hopson C."/>
            <person name="Hsuan V.W."/>
            <person name="Iida K."/>
            <person name="Karnes M."/>
            <person name="Khan S."/>
            <person name="Koesema E."/>
            <person name="Ishida J."/>
            <person name="Jiang P.X."/>
            <person name="Jones T."/>
            <person name="Kawai J."/>
            <person name="Kamiya A."/>
            <person name="Meyers C."/>
            <person name="Nakajima M."/>
            <person name="Narusaka M."/>
            <person name="Seki M."/>
            <person name="Sakurai T."/>
            <person name="Satou M."/>
            <person name="Tamse R."/>
            <person name="Vaysberg M."/>
            <person name="Wallender E.K."/>
            <person name="Wong C."/>
            <person name="Yamamura Y."/>
            <person name="Yuan S."/>
            <person name="Shinozaki K."/>
            <person name="Davis R.W."/>
            <person name="Theologis A."/>
            <person name="Ecker J.R."/>
        </authorList>
    </citation>
    <scope>NUCLEOTIDE SEQUENCE [LARGE SCALE MRNA]</scope>
    <source>
        <strain>cv. Columbia</strain>
    </source>
</reference>
<reference key="5">
    <citation type="journal article" date="2014" name="Front. Plant Sci.">
        <title>The complex becomes more complex: protein-protein interactions of SnRK1 with DUF581 family proteins provide a framework for cell- and stimulus type-specific SnRK1 signaling in plants.</title>
        <authorList>
            <person name="Nietzsche M."/>
            <person name="Schiessl I."/>
            <person name="Boernke F."/>
        </authorList>
    </citation>
    <scope>GENE FAMILY</scope>
    <scope>FUNCTION</scope>
</reference>
<reference key="6">
    <citation type="journal article" date="2014" name="Front. Plant Sci.">
        <title>Corrigendum: The complex becomes more complex: protein-protein interactions of SnRK1 with DUF581 family proteins provide a framework for cell- and stimulus type-specific SnRK1 signaling in plants.</title>
        <authorList>
            <person name="Boernke F."/>
        </authorList>
    </citation>
    <scope>ERRATUM OF PUBMED:24600465</scope>
</reference>
<reference key="7">
    <citation type="journal article" date="2014" name="PLoS ONE">
        <title>DUF581 is plant specific FCS-like zinc finger involved in protein-protein interaction.</title>
        <authorList>
            <person name="Jamsheer K M."/>
            <person name="Laxmi A."/>
        </authorList>
    </citation>
    <scope>GENE FAMILY</scope>
    <scope>NOMENCLATURE</scope>
</reference>
<reference key="8">
    <citation type="journal article" date="2015" name="Front. Plant Sci.">
        <title>Expression of Arabidopsis FCS-Like Zinc finger genes is differentially regulated by sugars, cellular energy level, and abiotic stress.</title>
        <authorList>
            <person name="Jamsheer K M."/>
            <person name="Laxmi A."/>
        </authorList>
    </citation>
    <scope>INDUCTION</scope>
</reference>
<reference key="9">
    <citation type="journal article" date="2018" name="J. Biol. Chem.">
        <title>The FCS-like zinc finger scaffold of the kinase SnRK1 is formed by the coordinated actions of the FLZ domain and intrinsically disordered regions.</title>
        <authorList>
            <person name="Jamsheer K M."/>
            <person name="Shukla B.N."/>
            <person name="Jindal S."/>
            <person name="Gopan N."/>
            <person name="Mannully C.T."/>
            <person name="Laxmi A."/>
        </authorList>
    </citation>
    <scope>INTERACTION WITH KIN10; KIN11; KINB1; KINB2 AND KINB3</scope>
    <scope>SUBCELLULAR LOCATION</scope>
</reference>